<organism>
    <name type="scientific">Orientia tsutsugamushi</name>
    <name type="common">Rickettsia tsutsugamushi</name>
    <dbReference type="NCBI Taxonomy" id="784"/>
    <lineage>
        <taxon>Bacteria</taxon>
        <taxon>Pseudomonadati</taxon>
        <taxon>Pseudomonadota</taxon>
        <taxon>Alphaproteobacteria</taxon>
        <taxon>Rickettsiales</taxon>
        <taxon>Rickettsiaceae</taxon>
        <taxon>Rickettsieae</taxon>
        <taxon>Orientia</taxon>
    </lineage>
</organism>
<proteinExistence type="inferred from homology"/>
<reference key="1">
    <citation type="journal article" date="1992" name="J. Biol. Chem.">
        <title>Diversity of immunodominant 56-kDa type-specific antigen (TSA) of Rickettsia tsutsugamushi. Sequence and comparative analyses of the genes encoding TSA homologues from four antigenic variants.</title>
        <authorList>
            <person name="Ohashi N."/>
            <person name="Nashimoto H."/>
            <person name="Ikeda H."/>
            <person name="Tamura A."/>
        </authorList>
    </citation>
    <scope>NUCLEOTIDE SEQUENCE [GENOMIC DNA]</scope>
    <source>
        <strain>Kuroki</strain>
    </source>
</reference>
<comment type="function">
    <text>May be an adherent factor for rickettsial adsorption to the host-cell surface and a determinant of virulence of individual rickettsial strain. It is the major outer membrane protein.</text>
</comment>
<comment type="subcellular location">
    <subcellularLocation>
        <location>Cell membrane</location>
        <topology>Multi-pass membrane protein</topology>
    </subcellularLocation>
</comment>
<evidence type="ECO:0000255" key="1"/>
<evidence type="ECO:0000256" key="2">
    <source>
        <dbReference type="SAM" id="MobiDB-lite"/>
    </source>
</evidence>
<protein>
    <recommendedName>
        <fullName>56 kDa type-specific antigen</fullName>
        <shortName>TSA</shortName>
    </recommendedName>
    <alternativeName>
        <fullName>56 kDa scrub typhus antigen</fullName>
    </alternativeName>
    <alternativeName>
        <fullName>STA56</fullName>
    </alternativeName>
    <alternativeName>
        <fullName>TSR56</fullName>
    </alternativeName>
</protein>
<dbReference type="EMBL" id="M63380">
    <property type="protein sequence ID" value="AAA26395.1"/>
    <property type="molecule type" value="Genomic_DNA"/>
</dbReference>
<dbReference type="PIR" id="C42804">
    <property type="entry name" value="C42804"/>
</dbReference>
<dbReference type="STRING" id="357244.OTBS_0602"/>
<dbReference type="GO" id="GO:0005886">
    <property type="term" value="C:plasma membrane"/>
    <property type="evidence" value="ECO:0007669"/>
    <property type="project" value="UniProtKB-SubCell"/>
</dbReference>
<dbReference type="Gene3D" id="2.40.160.20">
    <property type="match status" value="1"/>
</dbReference>
<dbReference type="InterPro" id="IPR011250">
    <property type="entry name" value="OMP/PagP_b-brl"/>
</dbReference>
<dbReference type="InterPro" id="IPR004933">
    <property type="entry name" value="TSA"/>
</dbReference>
<dbReference type="NCBIfam" id="NF033390">
    <property type="entry name" value="Orientia_TSA56"/>
    <property type="match status" value="1"/>
</dbReference>
<dbReference type="Pfam" id="PF03249">
    <property type="entry name" value="TSA"/>
    <property type="match status" value="1"/>
</dbReference>
<dbReference type="PRINTS" id="PR01707">
    <property type="entry name" value="56KDTSANTIGN"/>
</dbReference>
<dbReference type="SUPFAM" id="SSF56925">
    <property type="entry name" value="OMPA-like"/>
    <property type="match status" value="1"/>
</dbReference>
<accession>P37916</accession>
<keyword id="KW-1003">Cell membrane</keyword>
<keyword id="KW-0472">Membrane</keyword>
<keyword id="KW-0732">Signal</keyword>
<keyword id="KW-0812">Transmembrane</keyword>
<keyword id="KW-1133">Transmembrane helix</keyword>
<keyword id="KW-0843">Virulence</keyword>
<sequence>MKKIMLIASAMSALSLPFSASAIELEDEVGLECGPYAKVGVVGGMITGAESTRLDSTDSEGKKHLSLTTGLPFGGTLAAGMTIAPGFRAELGVMYLRNISAEVEVGKGEVDSKGEIKADSGGGTDAPIRKPFKLTPPQPTMMPISIADRDFGIDIPNIPQAQAQAAQPPLNDQKRAAARIAWLKNCAGIDYMVKDPNNPGHMMVNPVLLNIPQGNPNPVGQPPQRANQPANFAIHNHEQWRSLVVGLAALSNANKPSASPVKVLSDKIIQIYSDIKPFADIAGINVPDTGLPNSASIEQIQSKIQELGDTLEELRDSFDGYINNAFVNQIHLNFVMPPQAQQQQGQGQQQQAQATAQEAVAAAAVRLLNGSDQIAQLYKDLVKLQRHAGIRKAMEKLAAQQEEDAKNQGKGDCKQQQGASEKSKEGKVKETEFDLSMVVGQVKLYADLVTTESFSIYGGVGAGLAYTYGKIDNKDVKGYTGMVASGALGVAINAAEGVCVDLEAGYMHSFSKVEDKYQVNAFIASACVRYNF</sequence>
<name>TSAR_ORITS</name>
<feature type="signal peptide" evidence="1">
    <location>
        <begin position="1"/>
        <end position="22"/>
    </location>
</feature>
<feature type="chain" id="PRO_0000022593" description="56 kDa type-specific antigen">
    <location>
        <begin position="23"/>
        <end position="532"/>
    </location>
</feature>
<feature type="transmembrane region" description="Helical" evidence="1">
    <location>
        <begin position="67"/>
        <end position="87"/>
    </location>
</feature>
<feature type="transmembrane region" description="Helical" evidence="1">
    <location>
        <begin position="480"/>
        <end position="500"/>
    </location>
</feature>
<feature type="region of interest" description="Disordered" evidence="2">
    <location>
        <begin position="113"/>
        <end position="140"/>
    </location>
</feature>
<feature type="region of interest" description="Disordered" evidence="2">
    <location>
        <begin position="400"/>
        <end position="426"/>
    </location>
</feature>
<feature type="compositionally biased region" description="Basic and acidic residues" evidence="2">
    <location>
        <begin position="403"/>
        <end position="413"/>
    </location>
</feature>